<reference key="1">
    <citation type="journal article" date="2010" name="Genome Biol.">
        <title>Structure and dynamics of the pan-genome of Streptococcus pneumoniae and closely related species.</title>
        <authorList>
            <person name="Donati C."/>
            <person name="Hiller N.L."/>
            <person name="Tettelin H."/>
            <person name="Muzzi A."/>
            <person name="Croucher N.J."/>
            <person name="Angiuoli S.V."/>
            <person name="Oggioni M."/>
            <person name="Dunning Hotopp J.C."/>
            <person name="Hu F.Z."/>
            <person name="Riley D.R."/>
            <person name="Covacci A."/>
            <person name="Mitchell T.J."/>
            <person name="Bentley S.D."/>
            <person name="Kilian M."/>
            <person name="Ehrlich G.D."/>
            <person name="Rappuoli R."/>
            <person name="Moxon E.R."/>
            <person name="Masignani V."/>
        </authorList>
    </citation>
    <scope>NUCLEOTIDE SEQUENCE [LARGE SCALE GENOMIC DNA]</scope>
    <source>
        <strain>Hungary19A-6</strain>
    </source>
</reference>
<dbReference type="EC" id="2.4.1.21" evidence="1"/>
<dbReference type="EMBL" id="CP000936">
    <property type="protein sequence ID" value="ACA37169.1"/>
    <property type="molecule type" value="Genomic_DNA"/>
</dbReference>
<dbReference type="RefSeq" id="WP_000697287.1">
    <property type="nucleotide sequence ID" value="NC_010380.1"/>
</dbReference>
<dbReference type="SMR" id="B1IBR0"/>
<dbReference type="CAZy" id="GT5">
    <property type="family name" value="Glycosyltransferase Family 5"/>
</dbReference>
<dbReference type="KEGG" id="spv:SPH_1217"/>
<dbReference type="HOGENOM" id="CLU_009583_18_2_9"/>
<dbReference type="UniPathway" id="UPA00164"/>
<dbReference type="Proteomes" id="UP000002163">
    <property type="component" value="Chromosome"/>
</dbReference>
<dbReference type="GO" id="GO:0009011">
    <property type="term" value="F:alpha-1,4-glucan glucosyltransferase (ADP-glucose donor) activity"/>
    <property type="evidence" value="ECO:0007669"/>
    <property type="project" value="UniProtKB-UniRule"/>
</dbReference>
<dbReference type="GO" id="GO:0004373">
    <property type="term" value="F:alpha-1,4-glucan glucosyltransferase (UDP-glucose donor) activity"/>
    <property type="evidence" value="ECO:0007669"/>
    <property type="project" value="InterPro"/>
</dbReference>
<dbReference type="GO" id="GO:0005978">
    <property type="term" value="P:glycogen biosynthetic process"/>
    <property type="evidence" value="ECO:0007669"/>
    <property type="project" value="UniProtKB-UniRule"/>
</dbReference>
<dbReference type="CDD" id="cd03791">
    <property type="entry name" value="GT5_Glycogen_synthase_DULL1-like"/>
    <property type="match status" value="1"/>
</dbReference>
<dbReference type="Gene3D" id="3.40.50.2000">
    <property type="entry name" value="Glycogen Phosphorylase B"/>
    <property type="match status" value="2"/>
</dbReference>
<dbReference type="HAMAP" id="MF_00484">
    <property type="entry name" value="Glycogen_synth"/>
    <property type="match status" value="1"/>
</dbReference>
<dbReference type="InterPro" id="IPR001296">
    <property type="entry name" value="Glyco_trans_1"/>
</dbReference>
<dbReference type="InterPro" id="IPR011835">
    <property type="entry name" value="GS/SS"/>
</dbReference>
<dbReference type="InterPro" id="IPR013534">
    <property type="entry name" value="Starch_synth_cat_dom"/>
</dbReference>
<dbReference type="NCBIfam" id="TIGR02095">
    <property type="entry name" value="glgA"/>
    <property type="match status" value="1"/>
</dbReference>
<dbReference type="NCBIfam" id="NF001898">
    <property type="entry name" value="PRK00654.1-1"/>
    <property type="match status" value="1"/>
</dbReference>
<dbReference type="PANTHER" id="PTHR45825:SF11">
    <property type="entry name" value="ALPHA AMYLASE DOMAIN-CONTAINING PROTEIN"/>
    <property type="match status" value="1"/>
</dbReference>
<dbReference type="PANTHER" id="PTHR45825">
    <property type="entry name" value="GRANULE-BOUND STARCH SYNTHASE 1, CHLOROPLASTIC/AMYLOPLASTIC"/>
    <property type="match status" value="1"/>
</dbReference>
<dbReference type="Pfam" id="PF08323">
    <property type="entry name" value="Glyco_transf_5"/>
    <property type="match status" value="1"/>
</dbReference>
<dbReference type="Pfam" id="PF00534">
    <property type="entry name" value="Glycos_transf_1"/>
    <property type="match status" value="1"/>
</dbReference>
<dbReference type="SUPFAM" id="SSF53756">
    <property type="entry name" value="UDP-Glycosyltransferase/glycogen phosphorylase"/>
    <property type="match status" value="1"/>
</dbReference>
<sequence length="477" mass="54032">MKILFVAAEGAPFSKTGGLGDVIGALPKSLVKAGHEVAVILPYYDMVEAKFGNQIEDVLHFEVSVGWRRQYCGIKKTVLNGVTFYFIDNQYYFFRGHVYGDFDDGERFAFFQLAAIEAMERIAFIPDLLHVHDYHTAMIPFLLKEKYRWIQAYEDIETVLTIHNLEFQGQFSEGMLGDLFGVGFERYADGTLRWNNCLNWMKAGILYANRVSTVSPSYAHEIMTSQFGCNLDQILKMESGKVSGIVNGIDADLYNPQTDALLDYHFNQEDLSGKAKNKAKLQERVGLPVRADVPLVGIVSRLTRQKGFDVVVESLHHILQEDVQIVLLGTGDPAFEGAFSWFAQIYPDKLSANITFDVKLAQEIYAACDLFLMPSRFEPCGLSQMMAMRYGTLPLVHEVGGLRDTVCAFNPIEGSGTGFSFDNLSPYWLNWTFQTALDLYRNHPDIWRNLQKQAMESDFSWDTACKSYLDLYHSLVN</sequence>
<comment type="function">
    <text evidence="1">Synthesizes alpha-1,4-glucan chains using ADP-glucose.</text>
</comment>
<comment type="catalytic activity">
    <reaction evidence="1">
        <text>[(1-&gt;4)-alpha-D-glucosyl](n) + ADP-alpha-D-glucose = [(1-&gt;4)-alpha-D-glucosyl](n+1) + ADP + H(+)</text>
        <dbReference type="Rhea" id="RHEA:18189"/>
        <dbReference type="Rhea" id="RHEA-COMP:9584"/>
        <dbReference type="Rhea" id="RHEA-COMP:9587"/>
        <dbReference type="ChEBI" id="CHEBI:15378"/>
        <dbReference type="ChEBI" id="CHEBI:15444"/>
        <dbReference type="ChEBI" id="CHEBI:57498"/>
        <dbReference type="ChEBI" id="CHEBI:456216"/>
        <dbReference type="EC" id="2.4.1.21"/>
    </reaction>
</comment>
<comment type="pathway">
    <text evidence="1">Glycan biosynthesis; glycogen biosynthesis.</text>
</comment>
<comment type="similarity">
    <text evidence="1">Belongs to the glycosyltransferase 1 family. Bacterial/plant glycogen synthase subfamily.</text>
</comment>
<proteinExistence type="inferred from homology"/>
<organism>
    <name type="scientific">Streptococcus pneumoniae (strain Hungary19A-6)</name>
    <dbReference type="NCBI Taxonomy" id="487214"/>
    <lineage>
        <taxon>Bacteria</taxon>
        <taxon>Bacillati</taxon>
        <taxon>Bacillota</taxon>
        <taxon>Bacilli</taxon>
        <taxon>Lactobacillales</taxon>
        <taxon>Streptococcaceae</taxon>
        <taxon>Streptococcus</taxon>
    </lineage>
</organism>
<gene>
    <name evidence="1" type="primary">glgA</name>
    <name type="ordered locus">SPH_1217</name>
</gene>
<feature type="chain" id="PRO_1000126105" description="Glycogen synthase">
    <location>
        <begin position="1"/>
        <end position="477"/>
    </location>
</feature>
<feature type="binding site" evidence="1">
    <location>
        <position position="15"/>
    </location>
    <ligand>
        <name>ADP-alpha-D-glucose</name>
        <dbReference type="ChEBI" id="CHEBI:57498"/>
    </ligand>
</feature>
<accession>B1IBR0</accession>
<name>GLGA_STRPI</name>
<keyword id="KW-0320">Glycogen biosynthesis</keyword>
<keyword id="KW-0328">Glycosyltransferase</keyword>
<keyword id="KW-0808">Transferase</keyword>
<evidence type="ECO:0000255" key="1">
    <source>
        <dbReference type="HAMAP-Rule" id="MF_00484"/>
    </source>
</evidence>
<protein>
    <recommendedName>
        <fullName evidence="1">Glycogen synthase</fullName>
        <ecNumber evidence="1">2.4.1.21</ecNumber>
    </recommendedName>
    <alternativeName>
        <fullName evidence="1">Starch [bacterial glycogen] synthase</fullName>
    </alternativeName>
</protein>